<keyword id="KW-0131">Cell cycle</keyword>
<keyword id="KW-0132">Cell division</keyword>
<keyword id="KW-0342">GTP-binding</keyword>
<keyword id="KW-0460">Magnesium</keyword>
<keyword id="KW-0479">Metal-binding</keyword>
<keyword id="KW-0547">Nucleotide-binding</keyword>
<keyword id="KW-1185">Reference proteome</keyword>
<keyword id="KW-0717">Septation</keyword>
<gene>
    <name evidence="1" type="primary">engB</name>
    <name type="ordered locus">Swol_1652</name>
</gene>
<sequence length="193" mass="21793">MELKIKKAELEGIYVDINQLPVGNIPEIALAGRSNVGKSSLINKICNRKNLAKSSSTPGKTRTINYYLINDQWFMVDLPGYGYARVSREEKARWKKMVEAYLSQREQLRGVIQLLDIRHEPGENDILMKDWLLHLQIPVLVVATKADKLSRGARMKHIAIIRKTLDLPEMPLVFSAQSGDGVEELKAALAELL</sequence>
<organism>
    <name type="scientific">Syntrophomonas wolfei subsp. wolfei (strain DSM 2245B / Goettingen)</name>
    <dbReference type="NCBI Taxonomy" id="335541"/>
    <lineage>
        <taxon>Bacteria</taxon>
        <taxon>Bacillati</taxon>
        <taxon>Bacillota</taxon>
        <taxon>Clostridia</taxon>
        <taxon>Eubacteriales</taxon>
        <taxon>Syntrophomonadaceae</taxon>
        <taxon>Syntrophomonas</taxon>
    </lineage>
</organism>
<comment type="function">
    <text evidence="1">Necessary for normal cell division and for the maintenance of normal septation.</text>
</comment>
<comment type="cofactor">
    <cofactor evidence="1">
        <name>Mg(2+)</name>
        <dbReference type="ChEBI" id="CHEBI:18420"/>
    </cofactor>
</comment>
<comment type="similarity">
    <text evidence="1">Belongs to the TRAFAC class TrmE-Era-EngA-EngB-Septin-like GTPase superfamily. EngB GTPase family.</text>
</comment>
<comment type="sequence caution" evidence="2">
    <conflict type="erroneous initiation">
        <sequence resource="EMBL-CDS" id="ABI68950"/>
    </conflict>
</comment>
<reference key="1">
    <citation type="journal article" date="2010" name="Environ. Microbiol.">
        <title>The genome of Syntrophomonas wolfei: new insights into syntrophic metabolism and biohydrogen production.</title>
        <authorList>
            <person name="Sieber J.R."/>
            <person name="Sims D.R."/>
            <person name="Han C."/>
            <person name="Kim E."/>
            <person name="Lykidis A."/>
            <person name="Lapidus A.L."/>
            <person name="McDonnald E."/>
            <person name="Rohlin L."/>
            <person name="Culley D.E."/>
            <person name="Gunsalus R."/>
            <person name="McInerney M.J."/>
        </authorList>
    </citation>
    <scope>NUCLEOTIDE SEQUENCE [LARGE SCALE GENOMIC DNA]</scope>
    <source>
        <strain>DSM 2245B / Goettingen</strain>
    </source>
</reference>
<dbReference type="EMBL" id="CP000448">
    <property type="protein sequence ID" value="ABI68950.1"/>
    <property type="status" value="ALT_INIT"/>
    <property type="molecule type" value="Genomic_DNA"/>
</dbReference>
<dbReference type="RefSeq" id="WP_041427490.1">
    <property type="nucleotide sequence ID" value="NC_008346.1"/>
</dbReference>
<dbReference type="SMR" id="Q0AWF4"/>
<dbReference type="STRING" id="335541.Swol_1652"/>
<dbReference type="KEGG" id="swo:Swol_1652"/>
<dbReference type="eggNOG" id="COG0218">
    <property type="taxonomic scope" value="Bacteria"/>
</dbReference>
<dbReference type="HOGENOM" id="CLU_033732_3_0_9"/>
<dbReference type="OrthoDB" id="9804921at2"/>
<dbReference type="Proteomes" id="UP000001968">
    <property type="component" value="Chromosome"/>
</dbReference>
<dbReference type="GO" id="GO:0005829">
    <property type="term" value="C:cytosol"/>
    <property type="evidence" value="ECO:0007669"/>
    <property type="project" value="TreeGrafter"/>
</dbReference>
<dbReference type="GO" id="GO:0005525">
    <property type="term" value="F:GTP binding"/>
    <property type="evidence" value="ECO:0007669"/>
    <property type="project" value="UniProtKB-UniRule"/>
</dbReference>
<dbReference type="GO" id="GO:0046872">
    <property type="term" value="F:metal ion binding"/>
    <property type="evidence" value="ECO:0007669"/>
    <property type="project" value="UniProtKB-KW"/>
</dbReference>
<dbReference type="GO" id="GO:0000917">
    <property type="term" value="P:division septum assembly"/>
    <property type="evidence" value="ECO:0007669"/>
    <property type="project" value="UniProtKB-KW"/>
</dbReference>
<dbReference type="CDD" id="cd01876">
    <property type="entry name" value="YihA_EngB"/>
    <property type="match status" value="1"/>
</dbReference>
<dbReference type="FunFam" id="3.40.50.300:FF:000098">
    <property type="entry name" value="Probable GTP-binding protein EngB"/>
    <property type="match status" value="1"/>
</dbReference>
<dbReference type="Gene3D" id="3.40.50.300">
    <property type="entry name" value="P-loop containing nucleotide triphosphate hydrolases"/>
    <property type="match status" value="1"/>
</dbReference>
<dbReference type="HAMAP" id="MF_00321">
    <property type="entry name" value="GTPase_EngB"/>
    <property type="match status" value="1"/>
</dbReference>
<dbReference type="InterPro" id="IPR030393">
    <property type="entry name" value="G_ENGB_dom"/>
</dbReference>
<dbReference type="InterPro" id="IPR006073">
    <property type="entry name" value="GTP-bd"/>
</dbReference>
<dbReference type="InterPro" id="IPR019987">
    <property type="entry name" value="GTP-bd_ribosome_bio_YsxC"/>
</dbReference>
<dbReference type="InterPro" id="IPR027417">
    <property type="entry name" value="P-loop_NTPase"/>
</dbReference>
<dbReference type="NCBIfam" id="TIGR03598">
    <property type="entry name" value="GTPase_YsxC"/>
    <property type="match status" value="1"/>
</dbReference>
<dbReference type="PANTHER" id="PTHR11649:SF13">
    <property type="entry name" value="ENGB-TYPE G DOMAIN-CONTAINING PROTEIN"/>
    <property type="match status" value="1"/>
</dbReference>
<dbReference type="PANTHER" id="PTHR11649">
    <property type="entry name" value="MSS1/TRME-RELATED GTP-BINDING PROTEIN"/>
    <property type="match status" value="1"/>
</dbReference>
<dbReference type="Pfam" id="PF01926">
    <property type="entry name" value="MMR_HSR1"/>
    <property type="match status" value="1"/>
</dbReference>
<dbReference type="SUPFAM" id="SSF52540">
    <property type="entry name" value="P-loop containing nucleoside triphosphate hydrolases"/>
    <property type="match status" value="1"/>
</dbReference>
<dbReference type="PROSITE" id="PS51706">
    <property type="entry name" value="G_ENGB"/>
    <property type="match status" value="1"/>
</dbReference>
<accession>Q0AWF4</accession>
<evidence type="ECO:0000255" key="1">
    <source>
        <dbReference type="HAMAP-Rule" id="MF_00321"/>
    </source>
</evidence>
<evidence type="ECO:0000305" key="2"/>
<protein>
    <recommendedName>
        <fullName evidence="1">Probable GTP-binding protein EngB</fullName>
    </recommendedName>
</protein>
<name>ENGB_SYNWW</name>
<proteinExistence type="inferred from homology"/>
<feature type="chain" id="PRO_0000266972" description="Probable GTP-binding protein EngB">
    <location>
        <begin position="1"/>
        <end position="193"/>
    </location>
</feature>
<feature type="domain" description="EngB-type G" evidence="1">
    <location>
        <begin position="24"/>
        <end position="193"/>
    </location>
</feature>
<feature type="binding site" evidence="1">
    <location>
        <begin position="32"/>
        <end position="39"/>
    </location>
    <ligand>
        <name>GTP</name>
        <dbReference type="ChEBI" id="CHEBI:37565"/>
    </ligand>
</feature>
<feature type="binding site" evidence="1">
    <location>
        <position position="39"/>
    </location>
    <ligand>
        <name>Mg(2+)</name>
        <dbReference type="ChEBI" id="CHEBI:18420"/>
    </ligand>
</feature>
<feature type="binding site" evidence="1">
    <location>
        <begin position="59"/>
        <end position="63"/>
    </location>
    <ligand>
        <name>GTP</name>
        <dbReference type="ChEBI" id="CHEBI:37565"/>
    </ligand>
</feature>
<feature type="binding site" evidence="1">
    <location>
        <position position="61"/>
    </location>
    <ligand>
        <name>Mg(2+)</name>
        <dbReference type="ChEBI" id="CHEBI:18420"/>
    </ligand>
</feature>
<feature type="binding site" evidence="1">
    <location>
        <begin position="77"/>
        <end position="80"/>
    </location>
    <ligand>
        <name>GTP</name>
        <dbReference type="ChEBI" id="CHEBI:37565"/>
    </ligand>
</feature>
<feature type="binding site" evidence="1">
    <location>
        <begin position="144"/>
        <end position="147"/>
    </location>
    <ligand>
        <name>GTP</name>
        <dbReference type="ChEBI" id="CHEBI:37565"/>
    </ligand>
</feature>
<feature type="binding site" evidence="1">
    <location>
        <begin position="174"/>
        <end position="176"/>
    </location>
    <ligand>
        <name>GTP</name>
        <dbReference type="ChEBI" id="CHEBI:37565"/>
    </ligand>
</feature>